<organism>
    <name type="scientific">Ursus maritimus</name>
    <name type="common">Polar bear</name>
    <name type="synonym">Thalarctos maritimus</name>
    <dbReference type="NCBI Taxonomy" id="29073"/>
    <lineage>
        <taxon>Eukaryota</taxon>
        <taxon>Metazoa</taxon>
        <taxon>Chordata</taxon>
        <taxon>Craniata</taxon>
        <taxon>Vertebrata</taxon>
        <taxon>Euteleostomi</taxon>
        <taxon>Mammalia</taxon>
        <taxon>Eutheria</taxon>
        <taxon>Laurasiatheria</taxon>
        <taxon>Carnivora</taxon>
        <taxon>Caniformia</taxon>
        <taxon>Ursidae</taxon>
        <taxon>Ursus</taxon>
    </lineage>
</organism>
<proteinExistence type="inferred from homology"/>
<sequence length="88" mass="9676">MRLFLSLPVWVAVLAMVLEGPAPAQAAPEISSTLGSIPDKLKEFGNTLEDKARAAIESIKQSDIPAKTRNWFSETFNKVKEQLKTAFS</sequence>
<evidence type="ECO:0000250" key="1">
    <source>
        <dbReference type="UniProtKB" id="P02654"/>
    </source>
</evidence>
<evidence type="ECO:0000250" key="2">
    <source>
        <dbReference type="UniProtKB" id="P33047"/>
    </source>
</evidence>
<evidence type="ECO:0000250" key="3">
    <source>
        <dbReference type="UniProtKB" id="P86336"/>
    </source>
</evidence>
<evidence type="ECO:0000255" key="4"/>
<evidence type="ECO:0000305" key="5"/>
<accession>P0DPH6</accession>
<name>APOC1_URSMA</name>
<protein>
    <recommendedName>
        <fullName>Apolipoprotein C-I</fullName>
        <shortName>Apo-CI</shortName>
        <shortName>ApoC-I</shortName>
    </recommendedName>
    <alternativeName>
        <fullName>Apolipoprotein C1</fullName>
    </alternativeName>
    <component>
        <recommendedName>
            <fullName>Truncated apolipoprotein C-I</fullName>
        </recommendedName>
    </component>
</protein>
<reference key="1">
    <citation type="journal article" date="2014" name="Cell">
        <title>Population genomics reveal recent speciation and rapid evolutionary adaptation in polar bears.</title>
        <authorList>
            <person name="Liu S."/>
            <person name="Lorenzen E.D."/>
            <person name="Fumagalli M."/>
            <person name="Li B."/>
            <person name="Harris K."/>
            <person name="Xiong Z."/>
            <person name="Zhou L."/>
            <person name="Korneliussen T.S."/>
            <person name="Somel M."/>
            <person name="Babbitt C."/>
            <person name="Wray G."/>
            <person name="Li J."/>
            <person name="He W."/>
            <person name="Wang Z."/>
            <person name="Fu W."/>
            <person name="Xiang X."/>
            <person name="Morgan C.C."/>
            <person name="Doherty A."/>
            <person name="O'Connell M.J."/>
            <person name="McInerney J.O."/>
            <person name="Born E.W."/>
            <person name="Dalen L."/>
            <person name="Dietz R."/>
            <person name="Orlando L."/>
            <person name="Sonne C."/>
            <person name="Zhang G."/>
            <person name="Nielsen R."/>
            <person name="Willerslev E."/>
            <person name="Wang J."/>
        </authorList>
    </citation>
    <scope>NUCLEOTIDE SEQUENCE [LARGE SCALE GENOMIC DNA]</scope>
</reference>
<reference key="2">
    <citation type="submission" date="2013-05" db="EMBL/GenBank/DDBJ databases">
        <title>Transcriptome assembly and SNP discovery in polar bears (Ursus maritimus) of Western Hudson Bay.</title>
        <authorList>
            <person name="Malenfant R.M."/>
            <person name="Coltman D.W."/>
            <person name="Richardson E.S."/>
            <person name="Lunn N.J."/>
            <person name="Andriashek D.S."/>
            <person name="Davis C.S."/>
        </authorList>
    </citation>
    <scope>NUCLEOTIDE SEQUENCE [LARGE SCALE MRNA]</scope>
</reference>
<reference key="3">
    <citation type="unpublished observations" date="2018-05">
        <authorList>
            <person name="Puppione D.L."/>
        </authorList>
    </citation>
    <scope>IDENTIFICATION</scope>
</reference>
<gene>
    <name type="primary">APOC1</name>
</gene>
<comment type="function">
    <text evidence="1 2">Inhibitor of lipoprotein binding to the low density lipoprotein (LDL) receptor, LDL receptor-related protein, and very low density lipoprotein (VLDL) receptor. Associates with high density lipoproteins (HDL) and the triacylglycerol-rich lipoproteins in the plasma and makes up about 10% of the protein of the VLDL and 2% of that of HDL. Appears to interfere directly with fatty acid uptake and is also the major plasma inhibitor of cholesteryl ester transfer protein (CETP). Binds free fatty acids and reduces their intracellular esterification. Modulates the interaction of APOE with beta-migrating VLDL and inhibits binding of beta-VLDL to the LDL receptor-related protein.</text>
</comment>
<comment type="subcellular location">
    <subcellularLocation>
        <location>Secreted</location>
    </subcellularLocation>
</comment>
<comment type="similarity">
    <text evidence="5">Belongs to the apolipoprotein C1 family.</text>
</comment>
<keyword id="KW-0445">Lipid transport</keyword>
<keyword id="KW-1185">Reference proteome</keyword>
<keyword id="KW-0964">Secreted</keyword>
<keyword id="KW-0732">Signal</keyword>
<keyword id="KW-0813">Transport</keyword>
<keyword id="KW-0850">VLDL</keyword>
<feature type="signal peptide" evidence="4">
    <location>
        <begin position="1"/>
        <end position="26"/>
    </location>
</feature>
<feature type="chain" id="PRO_0000444596" description="Apolipoprotein C-I">
    <location>
        <begin position="27"/>
        <end position="88"/>
    </location>
</feature>
<feature type="chain" id="PRO_0000444597" description="Truncated apolipoprotein C-I" evidence="3">
    <location>
        <begin position="29"/>
        <end position="88"/>
    </location>
</feature>
<dbReference type="EMBL" id="AVOR01000000">
    <property type="status" value="NOT_ANNOTATED_CDS"/>
    <property type="molecule type" value="Genomic_DNA"/>
</dbReference>
<dbReference type="EMBL" id="GAJD01000000">
    <property type="status" value="NOT_ANNOTATED_CDS"/>
    <property type="molecule type" value="Transcribed_RNA"/>
</dbReference>
<dbReference type="RefSeq" id="XP_008682671.1">
    <property type="nucleotide sequence ID" value="XM_008684449.1"/>
</dbReference>
<dbReference type="SMR" id="P0DPH6"/>
<dbReference type="STRING" id="29073.ENSUMAP00000032380"/>
<dbReference type="Ensembl" id="ENSUMAT00000038279">
    <property type="protein sequence ID" value="ENSUMAP00000032380"/>
    <property type="gene ID" value="ENSUMAG00000023318"/>
</dbReference>
<dbReference type="GeneID" id="103657040"/>
<dbReference type="KEGG" id="umr:103657040"/>
<dbReference type="CTD" id="341"/>
<dbReference type="OMA" id="GTSTRNW"/>
<dbReference type="OrthoDB" id="8941712at2759"/>
<dbReference type="Proteomes" id="UP000261680">
    <property type="component" value="Unplaced"/>
</dbReference>
<dbReference type="GO" id="GO:0005783">
    <property type="term" value="C:endoplasmic reticulum"/>
    <property type="evidence" value="ECO:0007669"/>
    <property type="project" value="Ensembl"/>
</dbReference>
<dbReference type="GO" id="GO:0034364">
    <property type="term" value="C:high-density lipoprotein particle"/>
    <property type="evidence" value="ECO:0007669"/>
    <property type="project" value="Ensembl"/>
</dbReference>
<dbReference type="GO" id="GO:0034361">
    <property type="term" value="C:very-low-density lipoprotein particle"/>
    <property type="evidence" value="ECO:0007669"/>
    <property type="project" value="UniProtKB-KW"/>
</dbReference>
<dbReference type="GO" id="GO:0005504">
    <property type="term" value="F:fatty acid binding"/>
    <property type="evidence" value="ECO:0007669"/>
    <property type="project" value="Ensembl"/>
</dbReference>
<dbReference type="GO" id="GO:0004859">
    <property type="term" value="F:phospholipase inhibitor activity"/>
    <property type="evidence" value="ECO:0007669"/>
    <property type="project" value="Ensembl"/>
</dbReference>
<dbReference type="GO" id="GO:0033344">
    <property type="term" value="P:cholesterol efflux"/>
    <property type="evidence" value="ECO:0007669"/>
    <property type="project" value="Ensembl"/>
</dbReference>
<dbReference type="GO" id="GO:0008203">
    <property type="term" value="P:cholesterol metabolic process"/>
    <property type="evidence" value="ECO:0007669"/>
    <property type="project" value="Ensembl"/>
</dbReference>
<dbReference type="GO" id="GO:0034382">
    <property type="term" value="P:chylomicron remnant clearance"/>
    <property type="evidence" value="ECO:0007669"/>
    <property type="project" value="Ensembl"/>
</dbReference>
<dbReference type="GO" id="GO:0042157">
    <property type="term" value="P:lipoprotein metabolic process"/>
    <property type="evidence" value="ECO:0007669"/>
    <property type="project" value="InterPro"/>
</dbReference>
<dbReference type="GO" id="GO:0032375">
    <property type="term" value="P:negative regulation of cholesterol transport"/>
    <property type="evidence" value="ECO:0007669"/>
    <property type="project" value="Ensembl"/>
</dbReference>
<dbReference type="GO" id="GO:0045717">
    <property type="term" value="P:negative regulation of fatty acid biosynthetic process"/>
    <property type="evidence" value="ECO:0007669"/>
    <property type="project" value="Ensembl"/>
</dbReference>
<dbReference type="GO" id="GO:0010900">
    <property type="term" value="P:negative regulation of phosphatidylcholine catabolic process"/>
    <property type="evidence" value="ECO:0007669"/>
    <property type="project" value="Ensembl"/>
</dbReference>
<dbReference type="GO" id="GO:0048261">
    <property type="term" value="P:negative regulation of receptor-mediated endocytosis"/>
    <property type="evidence" value="ECO:0007669"/>
    <property type="project" value="Ensembl"/>
</dbReference>
<dbReference type="GO" id="GO:0010897">
    <property type="term" value="P:negative regulation of triglyceride catabolic process"/>
    <property type="evidence" value="ECO:0007669"/>
    <property type="project" value="Ensembl"/>
</dbReference>
<dbReference type="GO" id="GO:0010916">
    <property type="term" value="P:negative regulation of very-low-density lipoprotein particle clearance"/>
    <property type="evidence" value="ECO:0007669"/>
    <property type="project" value="Ensembl"/>
</dbReference>
<dbReference type="GO" id="GO:0033700">
    <property type="term" value="P:phospholipid efflux"/>
    <property type="evidence" value="ECO:0007669"/>
    <property type="project" value="Ensembl"/>
</dbReference>
<dbReference type="GO" id="GO:0034369">
    <property type="term" value="P:plasma lipoprotein particle remodeling"/>
    <property type="evidence" value="ECO:0007669"/>
    <property type="project" value="Ensembl"/>
</dbReference>
<dbReference type="GO" id="GO:0070328">
    <property type="term" value="P:triglyceride homeostasis"/>
    <property type="evidence" value="ECO:0007669"/>
    <property type="project" value="Ensembl"/>
</dbReference>
<dbReference type="GO" id="GO:0006641">
    <property type="term" value="P:triglyceride metabolic process"/>
    <property type="evidence" value="ECO:0007669"/>
    <property type="project" value="Ensembl"/>
</dbReference>
<dbReference type="GO" id="GO:0034447">
    <property type="term" value="P:very-low-density lipoprotein particle clearance"/>
    <property type="evidence" value="ECO:0007669"/>
    <property type="project" value="Ensembl"/>
</dbReference>
<dbReference type="Gene3D" id="4.10.260.30">
    <property type="entry name" value="Apolipoprotein C-I"/>
    <property type="match status" value="1"/>
</dbReference>
<dbReference type="InterPro" id="IPR043081">
    <property type="entry name" value="ApoC-1_sf"/>
</dbReference>
<dbReference type="InterPro" id="IPR006781">
    <property type="entry name" value="ApoC-I"/>
</dbReference>
<dbReference type="PANTHER" id="PTHR16565">
    <property type="entry name" value="APOLIPOPROTEIN C-I"/>
    <property type="match status" value="1"/>
</dbReference>
<dbReference type="PANTHER" id="PTHR16565:SF2">
    <property type="entry name" value="APOLIPOPROTEIN C-I"/>
    <property type="match status" value="1"/>
</dbReference>
<dbReference type="Pfam" id="PF04691">
    <property type="entry name" value="ApoC-I"/>
    <property type="match status" value="1"/>
</dbReference>